<accession>A8Z5A4</accession>
<proteinExistence type="inferred from homology"/>
<protein>
    <recommendedName>
        <fullName evidence="1">Oxygen-dependent choline dehydrogenase</fullName>
        <shortName evidence="1">CDH</shortName>
        <shortName evidence="1">CHD</shortName>
        <ecNumber evidence="1">1.1.99.1</ecNumber>
    </recommendedName>
    <alternativeName>
        <fullName evidence="1">Betaine aldehyde dehydrogenase</fullName>
        <shortName evidence="1">BADH</shortName>
        <ecNumber evidence="1">1.2.1.8</ecNumber>
    </alternativeName>
</protein>
<reference key="1">
    <citation type="journal article" date="2007" name="BMC Microbiol.">
        <title>Subtle genetic changes enhance virulence of methicillin resistant and sensitive Staphylococcus aureus.</title>
        <authorList>
            <person name="Highlander S.K."/>
            <person name="Hulten K.G."/>
            <person name="Qin X."/>
            <person name="Jiang H."/>
            <person name="Yerrapragada S."/>
            <person name="Mason E.O. Jr."/>
            <person name="Shang Y."/>
            <person name="Williams T.M."/>
            <person name="Fortunov R.M."/>
            <person name="Liu Y."/>
            <person name="Igboeli O."/>
            <person name="Petrosino J."/>
            <person name="Tirumalai M."/>
            <person name="Uzman A."/>
            <person name="Fox G.E."/>
            <person name="Cardenas A.M."/>
            <person name="Muzny D.M."/>
            <person name="Hemphill L."/>
            <person name="Ding Y."/>
            <person name="Dugan S."/>
            <person name="Blyth P.R."/>
            <person name="Buhay C.J."/>
            <person name="Dinh H.H."/>
            <person name="Hawes A.C."/>
            <person name="Holder M."/>
            <person name="Kovar C.L."/>
            <person name="Lee S.L."/>
            <person name="Liu W."/>
            <person name="Nazareth L.V."/>
            <person name="Wang Q."/>
            <person name="Zhou J."/>
            <person name="Kaplan S.L."/>
            <person name="Weinstock G.M."/>
        </authorList>
    </citation>
    <scope>NUCLEOTIDE SEQUENCE [LARGE SCALE GENOMIC DNA]</scope>
    <source>
        <strain>USA300 / TCH1516</strain>
    </source>
</reference>
<organism>
    <name type="scientific">Staphylococcus aureus (strain USA300 / TCH1516)</name>
    <dbReference type="NCBI Taxonomy" id="451516"/>
    <lineage>
        <taxon>Bacteria</taxon>
        <taxon>Bacillati</taxon>
        <taxon>Bacillota</taxon>
        <taxon>Bacilli</taxon>
        <taxon>Bacillales</taxon>
        <taxon>Staphylococcaceae</taxon>
        <taxon>Staphylococcus</taxon>
    </lineage>
</organism>
<name>BETA_STAAT</name>
<feature type="chain" id="PRO_1000083498" description="Oxygen-dependent choline dehydrogenase">
    <location>
        <begin position="1"/>
        <end position="569"/>
    </location>
</feature>
<feature type="active site" description="Proton acceptor" evidence="1">
    <location>
        <position position="475"/>
    </location>
</feature>
<feature type="binding site" evidence="1">
    <location>
        <begin position="9"/>
        <end position="38"/>
    </location>
    <ligand>
        <name>FAD</name>
        <dbReference type="ChEBI" id="CHEBI:57692"/>
    </ligand>
</feature>
<gene>
    <name evidence="1" type="primary">betA</name>
    <name type="ordered locus">USA300HOU_2605</name>
</gene>
<comment type="function">
    <text evidence="1">Involved in the biosynthesis of the osmoprotectant glycine betaine. Catalyzes the oxidation of choline to betaine aldehyde and betaine aldehyde to glycine betaine at the same rate.</text>
</comment>
<comment type="catalytic activity">
    <reaction evidence="1">
        <text>choline + A = betaine aldehyde + AH2</text>
        <dbReference type="Rhea" id="RHEA:17433"/>
        <dbReference type="ChEBI" id="CHEBI:13193"/>
        <dbReference type="ChEBI" id="CHEBI:15354"/>
        <dbReference type="ChEBI" id="CHEBI:15710"/>
        <dbReference type="ChEBI" id="CHEBI:17499"/>
        <dbReference type="EC" id="1.1.99.1"/>
    </reaction>
</comment>
<comment type="catalytic activity">
    <reaction evidence="1">
        <text>betaine aldehyde + NAD(+) + H2O = glycine betaine + NADH + 2 H(+)</text>
        <dbReference type="Rhea" id="RHEA:15305"/>
        <dbReference type="ChEBI" id="CHEBI:15377"/>
        <dbReference type="ChEBI" id="CHEBI:15378"/>
        <dbReference type="ChEBI" id="CHEBI:15710"/>
        <dbReference type="ChEBI" id="CHEBI:17750"/>
        <dbReference type="ChEBI" id="CHEBI:57540"/>
        <dbReference type="ChEBI" id="CHEBI:57945"/>
        <dbReference type="EC" id="1.2.1.8"/>
    </reaction>
</comment>
<comment type="cofactor">
    <cofactor evidence="1">
        <name>FAD</name>
        <dbReference type="ChEBI" id="CHEBI:57692"/>
    </cofactor>
</comment>
<comment type="pathway">
    <text evidence="1">Amine and polyamine biosynthesis; betaine biosynthesis via choline pathway; betaine aldehyde from choline (cytochrome c reductase route): step 1/1.</text>
</comment>
<comment type="similarity">
    <text evidence="1">Belongs to the GMC oxidoreductase family.</text>
</comment>
<sequence length="569" mass="63610">MSNKNKSYDYVIIGGGSAGSVLGNRLSEDKDKEVLVLEAGRSDYFWDLFIQMPAALMFPSGNKFYDWIYSTDEEPHMGGRKVAHARGKVLGGSSSINGMIYQRGNPMDYEGWAEPEGMETWDFAHCLPYFKKLEKTYGAAPYDKFRGHDGPIKLKRGPATNPLFQSFFDAGVEAGYHKTPDVNGFRQEGFGPFDSQVHRGRRMSASRAYLHPAMKRKNLTVETRAFVTEIHYEGRRATGVTYKKNGKLHTIDANEVILSGGAFNTPQLLQLSGIGDSEFLKSKGIEPRVHLPGVGENFEDHLEVYIQHKCKEPVSLQPSLDIKRMPFIGLQWIFTRTGAAASNHFEGGGFVRSNNEVDYPNLMFHFLPIAVRYDGQKAAVAHGYQVHVGPMYSNSRGSLKIKSKDPFEKPSIRFNYLSTEEDKKEWVEAIRVARNILSQKAMDPFNGGEISPGPEVQTDEEILDWVRRDGETALHPSCSAKMGPASDPMAVVDPLTMKVHGMENLRVVDASAMPRTTNGNIHAPVLMLAEKAADIIRGRKPLEPQYIDYYKHGVHDENEGAIEVKPYAK</sequence>
<dbReference type="EC" id="1.1.99.1" evidence="1"/>
<dbReference type="EC" id="1.2.1.8" evidence="1"/>
<dbReference type="EMBL" id="CP000730">
    <property type="protein sequence ID" value="ABX30591.1"/>
    <property type="molecule type" value="Genomic_DNA"/>
</dbReference>
<dbReference type="RefSeq" id="WP_000066521.1">
    <property type="nucleotide sequence ID" value="NC_010079.1"/>
</dbReference>
<dbReference type="SMR" id="A8Z5A4"/>
<dbReference type="KEGG" id="sax:USA300HOU_2605"/>
<dbReference type="HOGENOM" id="CLU_002865_7_1_9"/>
<dbReference type="UniPathway" id="UPA00529">
    <property type="reaction ID" value="UER00385"/>
</dbReference>
<dbReference type="GO" id="GO:0016020">
    <property type="term" value="C:membrane"/>
    <property type="evidence" value="ECO:0007669"/>
    <property type="project" value="TreeGrafter"/>
</dbReference>
<dbReference type="GO" id="GO:0008802">
    <property type="term" value="F:betaine-aldehyde dehydrogenase (NAD+) activity"/>
    <property type="evidence" value="ECO:0007669"/>
    <property type="project" value="UniProtKB-EC"/>
</dbReference>
<dbReference type="GO" id="GO:0008812">
    <property type="term" value="F:choline dehydrogenase activity"/>
    <property type="evidence" value="ECO:0007669"/>
    <property type="project" value="UniProtKB-UniRule"/>
</dbReference>
<dbReference type="GO" id="GO:0050660">
    <property type="term" value="F:flavin adenine dinucleotide binding"/>
    <property type="evidence" value="ECO:0007669"/>
    <property type="project" value="InterPro"/>
</dbReference>
<dbReference type="GO" id="GO:0019285">
    <property type="term" value="P:glycine betaine biosynthetic process from choline"/>
    <property type="evidence" value="ECO:0007669"/>
    <property type="project" value="UniProtKB-UniRule"/>
</dbReference>
<dbReference type="Gene3D" id="3.50.50.60">
    <property type="entry name" value="FAD/NAD(P)-binding domain"/>
    <property type="match status" value="1"/>
</dbReference>
<dbReference type="Gene3D" id="3.30.560.10">
    <property type="entry name" value="Glucose Oxidase, domain 3"/>
    <property type="match status" value="1"/>
</dbReference>
<dbReference type="HAMAP" id="MF_00750">
    <property type="entry name" value="Choline_dehydrogen"/>
    <property type="match status" value="1"/>
</dbReference>
<dbReference type="InterPro" id="IPR011533">
    <property type="entry name" value="BetA"/>
</dbReference>
<dbReference type="InterPro" id="IPR036188">
    <property type="entry name" value="FAD/NAD-bd_sf"/>
</dbReference>
<dbReference type="InterPro" id="IPR012132">
    <property type="entry name" value="GMC_OxRdtase"/>
</dbReference>
<dbReference type="InterPro" id="IPR000172">
    <property type="entry name" value="GMC_OxRdtase_N"/>
</dbReference>
<dbReference type="InterPro" id="IPR007867">
    <property type="entry name" value="GMC_OxRtase_C"/>
</dbReference>
<dbReference type="NCBIfam" id="TIGR01810">
    <property type="entry name" value="betA"/>
    <property type="match status" value="1"/>
</dbReference>
<dbReference type="NCBIfam" id="NF002550">
    <property type="entry name" value="PRK02106.1"/>
    <property type="match status" value="1"/>
</dbReference>
<dbReference type="PANTHER" id="PTHR11552:SF147">
    <property type="entry name" value="CHOLINE DEHYDROGENASE, MITOCHONDRIAL"/>
    <property type="match status" value="1"/>
</dbReference>
<dbReference type="PANTHER" id="PTHR11552">
    <property type="entry name" value="GLUCOSE-METHANOL-CHOLINE GMC OXIDOREDUCTASE"/>
    <property type="match status" value="1"/>
</dbReference>
<dbReference type="Pfam" id="PF05199">
    <property type="entry name" value="GMC_oxred_C"/>
    <property type="match status" value="1"/>
</dbReference>
<dbReference type="Pfam" id="PF00732">
    <property type="entry name" value="GMC_oxred_N"/>
    <property type="match status" value="1"/>
</dbReference>
<dbReference type="PIRSF" id="PIRSF000137">
    <property type="entry name" value="Alcohol_oxidase"/>
    <property type="match status" value="1"/>
</dbReference>
<dbReference type="SUPFAM" id="SSF54373">
    <property type="entry name" value="FAD-linked reductases, C-terminal domain"/>
    <property type="match status" value="1"/>
</dbReference>
<dbReference type="SUPFAM" id="SSF51905">
    <property type="entry name" value="FAD/NAD(P)-binding domain"/>
    <property type="match status" value="1"/>
</dbReference>
<dbReference type="PROSITE" id="PS00623">
    <property type="entry name" value="GMC_OXRED_1"/>
    <property type="match status" value="1"/>
</dbReference>
<dbReference type="PROSITE" id="PS00624">
    <property type="entry name" value="GMC_OXRED_2"/>
    <property type="match status" value="1"/>
</dbReference>
<keyword id="KW-0274">FAD</keyword>
<keyword id="KW-0285">Flavoprotein</keyword>
<keyword id="KW-0520">NAD</keyword>
<keyword id="KW-0560">Oxidoreductase</keyword>
<evidence type="ECO:0000255" key="1">
    <source>
        <dbReference type="HAMAP-Rule" id="MF_00750"/>
    </source>
</evidence>